<comment type="function">
    <text evidence="1">Carrier of the growing fatty acid chain in fatty acid biosynthesis.</text>
</comment>
<comment type="pathway">
    <text evidence="1">Lipid metabolism; fatty acid biosynthesis.</text>
</comment>
<comment type="subcellular location">
    <subcellularLocation>
        <location evidence="1">Cytoplasm</location>
    </subcellularLocation>
</comment>
<comment type="PTM">
    <text evidence="1">4'-phosphopantetheine is transferred from CoA to a specific serine of apo-ACP by AcpS. This modification is essential for activity because fatty acids are bound in thioester linkage to the sulfhydryl of the prosthetic group.</text>
</comment>
<comment type="similarity">
    <text evidence="1">Belongs to the acyl carrier protein (ACP) family.</text>
</comment>
<feature type="chain" id="PRO_1000139066" description="Acyl carrier protein">
    <location>
        <begin position="1"/>
        <end position="78"/>
    </location>
</feature>
<feature type="domain" description="Carrier" evidence="2">
    <location>
        <begin position="2"/>
        <end position="77"/>
    </location>
</feature>
<feature type="modified residue" description="O-(pantetheine 4'-phosphoryl)serine" evidence="2">
    <location>
        <position position="37"/>
    </location>
</feature>
<proteinExistence type="inferred from homology"/>
<organism>
    <name type="scientific">Salmonella paratyphi A (strain AKU_12601)</name>
    <dbReference type="NCBI Taxonomy" id="554290"/>
    <lineage>
        <taxon>Bacteria</taxon>
        <taxon>Pseudomonadati</taxon>
        <taxon>Pseudomonadota</taxon>
        <taxon>Gammaproteobacteria</taxon>
        <taxon>Enterobacterales</taxon>
        <taxon>Enterobacteriaceae</taxon>
        <taxon>Salmonella</taxon>
    </lineage>
</organism>
<reference key="1">
    <citation type="journal article" date="2009" name="BMC Genomics">
        <title>Pseudogene accumulation in the evolutionary histories of Salmonella enterica serovars Paratyphi A and Typhi.</title>
        <authorList>
            <person name="Holt K.E."/>
            <person name="Thomson N.R."/>
            <person name="Wain J."/>
            <person name="Langridge G.C."/>
            <person name="Hasan R."/>
            <person name="Bhutta Z.A."/>
            <person name="Quail M.A."/>
            <person name="Norbertczak H."/>
            <person name="Walker D."/>
            <person name="Simmonds M."/>
            <person name="White B."/>
            <person name="Bason N."/>
            <person name="Mungall K."/>
            <person name="Dougan G."/>
            <person name="Parkhill J."/>
        </authorList>
    </citation>
    <scope>NUCLEOTIDE SEQUENCE [LARGE SCALE GENOMIC DNA]</scope>
    <source>
        <strain>AKU_12601</strain>
    </source>
</reference>
<gene>
    <name evidence="1" type="primary">acpP</name>
    <name type="ordered locus">SSPA1539</name>
</gene>
<protein>
    <recommendedName>
        <fullName evidence="1">Acyl carrier protein</fullName>
        <shortName evidence="1">ACP</shortName>
    </recommendedName>
</protein>
<accession>B5BAH9</accession>
<name>ACP_SALPK</name>
<sequence>MSTIEERVKKIIGEQLGVKQEEVTNNASFVEDLGADSLDTVELVMALEEEFDTEIPDEEAEKITTVQAAIDYINGHQA</sequence>
<keyword id="KW-0963">Cytoplasm</keyword>
<keyword id="KW-0275">Fatty acid biosynthesis</keyword>
<keyword id="KW-0276">Fatty acid metabolism</keyword>
<keyword id="KW-0444">Lipid biosynthesis</keyword>
<keyword id="KW-0443">Lipid metabolism</keyword>
<keyword id="KW-0596">Phosphopantetheine</keyword>
<keyword id="KW-0597">Phosphoprotein</keyword>
<dbReference type="EMBL" id="FM200053">
    <property type="protein sequence ID" value="CAR59723.1"/>
    <property type="molecule type" value="Genomic_DNA"/>
</dbReference>
<dbReference type="RefSeq" id="WP_000103754.1">
    <property type="nucleotide sequence ID" value="NC_011147.1"/>
</dbReference>
<dbReference type="SMR" id="B5BAH9"/>
<dbReference type="GeneID" id="98387866"/>
<dbReference type="KEGG" id="sek:SSPA1539"/>
<dbReference type="HOGENOM" id="CLU_108696_5_1_6"/>
<dbReference type="UniPathway" id="UPA00094"/>
<dbReference type="Proteomes" id="UP000001869">
    <property type="component" value="Chromosome"/>
</dbReference>
<dbReference type="GO" id="GO:0005829">
    <property type="term" value="C:cytosol"/>
    <property type="evidence" value="ECO:0007669"/>
    <property type="project" value="TreeGrafter"/>
</dbReference>
<dbReference type="GO" id="GO:0016020">
    <property type="term" value="C:membrane"/>
    <property type="evidence" value="ECO:0007669"/>
    <property type="project" value="GOC"/>
</dbReference>
<dbReference type="GO" id="GO:0000035">
    <property type="term" value="F:acyl binding"/>
    <property type="evidence" value="ECO:0007669"/>
    <property type="project" value="TreeGrafter"/>
</dbReference>
<dbReference type="GO" id="GO:0000036">
    <property type="term" value="F:acyl carrier activity"/>
    <property type="evidence" value="ECO:0007669"/>
    <property type="project" value="UniProtKB-UniRule"/>
</dbReference>
<dbReference type="GO" id="GO:0009245">
    <property type="term" value="P:lipid A biosynthetic process"/>
    <property type="evidence" value="ECO:0007669"/>
    <property type="project" value="TreeGrafter"/>
</dbReference>
<dbReference type="FunFam" id="1.10.1200.10:FF:000001">
    <property type="entry name" value="Acyl carrier protein"/>
    <property type="match status" value="1"/>
</dbReference>
<dbReference type="Gene3D" id="1.10.1200.10">
    <property type="entry name" value="ACP-like"/>
    <property type="match status" value="1"/>
</dbReference>
<dbReference type="HAMAP" id="MF_01217">
    <property type="entry name" value="Acyl_carrier"/>
    <property type="match status" value="1"/>
</dbReference>
<dbReference type="InterPro" id="IPR003231">
    <property type="entry name" value="ACP"/>
</dbReference>
<dbReference type="InterPro" id="IPR036736">
    <property type="entry name" value="ACP-like_sf"/>
</dbReference>
<dbReference type="InterPro" id="IPR009081">
    <property type="entry name" value="PP-bd_ACP"/>
</dbReference>
<dbReference type="InterPro" id="IPR006162">
    <property type="entry name" value="Ppantetheine_attach_site"/>
</dbReference>
<dbReference type="NCBIfam" id="TIGR00517">
    <property type="entry name" value="acyl_carrier"/>
    <property type="match status" value="1"/>
</dbReference>
<dbReference type="NCBIfam" id="NF002148">
    <property type="entry name" value="PRK00982.1-2"/>
    <property type="match status" value="1"/>
</dbReference>
<dbReference type="NCBIfam" id="NF002149">
    <property type="entry name" value="PRK00982.1-3"/>
    <property type="match status" value="1"/>
</dbReference>
<dbReference type="NCBIfam" id="NF002150">
    <property type="entry name" value="PRK00982.1-4"/>
    <property type="match status" value="1"/>
</dbReference>
<dbReference type="NCBIfam" id="NF002151">
    <property type="entry name" value="PRK00982.1-5"/>
    <property type="match status" value="1"/>
</dbReference>
<dbReference type="PANTHER" id="PTHR20863">
    <property type="entry name" value="ACYL CARRIER PROTEIN"/>
    <property type="match status" value="1"/>
</dbReference>
<dbReference type="PANTHER" id="PTHR20863:SF76">
    <property type="entry name" value="CARRIER DOMAIN-CONTAINING PROTEIN"/>
    <property type="match status" value="1"/>
</dbReference>
<dbReference type="Pfam" id="PF00550">
    <property type="entry name" value="PP-binding"/>
    <property type="match status" value="1"/>
</dbReference>
<dbReference type="SUPFAM" id="SSF47336">
    <property type="entry name" value="ACP-like"/>
    <property type="match status" value="1"/>
</dbReference>
<dbReference type="PROSITE" id="PS50075">
    <property type="entry name" value="CARRIER"/>
    <property type="match status" value="1"/>
</dbReference>
<dbReference type="PROSITE" id="PS00012">
    <property type="entry name" value="PHOSPHOPANTETHEINE"/>
    <property type="match status" value="1"/>
</dbReference>
<evidence type="ECO:0000255" key="1">
    <source>
        <dbReference type="HAMAP-Rule" id="MF_01217"/>
    </source>
</evidence>
<evidence type="ECO:0000255" key="2">
    <source>
        <dbReference type="PROSITE-ProRule" id="PRU00258"/>
    </source>
</evidence>